<proteinExistence type="evidence at transcript level"/>
<sequence length="203" mass="22510">MACGATLKRTLDFDPLLSPASPKRRRCAPLSAPTSAAASPSSAAAATAASFSAAAASPQKYLRMEPSPFGDVSSRLTTEQILYNIKQEYKRMQKRRHLETSFQQTDPCCTSDAQPHAFLLSGPASPGTPSATSSPLKKEQPLFTLRQVGMICERLLKEREEKVREEYEEILNTKLAEQYDAFVKFTHDQIMRRYGEQPASYVS</sequence>
<feature type="chain" id="PRO_0000455440" description="Akirin-2">
    <location>
        <begin position="1"/>
        <end position="203"/>
    </location>
</feature>
<feature type="short sequence motif" description="Nuclear localization signal" evidence="3">
    <location>
        <begin position="22"/>
        <end position="27"/>
    </location>
</feature>
<feature type="short sequence motif" description="SYVS motif" evidence="3">
    <location>
        <begin position="200"/>
        <end position="203"/>
    </location>
</feature>
<feature type="modified residue" description="Phosphoserine" evidence="3">
    <location>
        <position position="18"/>
    </location>
</feature>
<feature type="modified residue" description="Phosphoserine" evidence="3">
    <location>
        <position position="21"/>
    </location>
</feature>
<feature type="modified residue" description="Phosphoserine" evidence="1">
    <location>
        <position position="57"/>
    </location>
</feature>
<feature type="sequence conflict" description="In Ref. 1; AER35882." evidence="7" ref="1">
    <original>S</original>
    <variation>N</variation>
    <location>
        <position position="18"/>
    </location>
</feature>
<evidence type="ECO:0000250" key="1">
    <source>
        <dbReference type="UniProtKB" id="B1AXD8"/>
    </source>
</evidence>
<evidence type="ECO:0000250" key="2">
    <source>
        <dbReference type="UniProtKB" id="Q25C79"/>
    </source>
</evidence>
<evidence type="ECO:0000250" key="3">
    <source>
        <dbReference type="UniProtKB" id="Q53H80"/>
    </source>
</evidence>
<evidence type="ECO:0000269" key="4">
    <source>
    </source>
</evidence>
<evidence type="ECO:0000269" key="5">
    <source>
    </source>
</evidence>
<evidence type="ECO:0000269" key="6">
    <source>
    </source>
</evidence>
<evidence type="ECO:0000305" key="7"/>
<evidence type="ECO:0000312" key="8">
    <source>
        <dbReference type="VGNC" id="VGNC:103023"/>
    </source>
</evidence>
<name>AKIR2_PIG</name>
<organism>
    <name type="scientific">Sus scrofa</name>
    <name type="common">Pig</name>
    <dbReference type="NCBI Taxonomy" id="9823"/>
    <lineage>
        <taxon>Eukaryota</taxon>
        <taxon>Metazoa</taxon>
        <taxon>Chordata</taxon>
        <taxon>Craniata</taxon>
        <taxon>Vertebrata</taxon>
        <taxon>Euteleostomi</taxon>
        <taxon>Mammalia</taxon>
        <taxon>Eutheria</taxon>
        <taxon>Laurasiatheria</taxon>
        <taxon>Artiodactyla</taxon>
        <taxon>Suina</taxon>
        <taxon>Suidae</taxon>
        <taxon>Sus</taxon>
    </lineage>
</organism>
<keyword id="KW-1064">Adaptive immunity</keyword>
<keyword id="KW-0963">Cytoplasm</keyword>
<keyword id="KW-0217">Developmental protein</keyword>
<keyword id="KW-0391">Immunity</keyword>
<keyword id="KW-0399">Innate immunity</keyword>
<keyword id="KW-0472">Membrane</keyword>
<keyword id="KW-0539">Nucleus</keyword>
<keyword id="KW-0597">Phosphoprotein</keyword>
<keyword id="KW-0653">Protein transport</keyword>
<keyword id="KW-1185">Reference proteome</keyword>
<keyword id="KW-0678">Repressor</keyword>
<keyword id="KW-0804">Transcription</keyword>
<keyword id="KW-0805">Transcription regulation</keyword>
<keyword id="KW-0813">Transport</keyword>
<keyword id="KW-0832">Ubl conjugation</keyword>
<comment type="function">
    <text evidence="1 3 5 6">Molecular adapter that acts as a bridge between a variety of multiprotein complexes, and which is involved in embryonic development, immunity, myogenesis and brain development (By similarity). Plays a key role in nuclear protein degradation by promoting import of proteasomes into the nucleus: directly binds to fully assembled 20S proteasomes at one end and to nuclear import receptor IPO9 at the other end, bridging them together and mediating the import of pre-assembled proteasome complexes through the nuclear pore (By similarity). Involved in innate immunity by regulating the production of interleukin-6 (IL6) downstream of Toll-like receptor (TLR): acts by bridging the NF-kappa-B inhibitor NFKBIZ and the SWI/SNF complex, leading to promote induction of IL6 (By similarity). Also involved in adaptive immunity by promoting B-cell activation (By similarity). Involved in brain development: required for the survival and proliferation of cerebral cortical progenitor cells (By similarity). Involved in myogenesis: required for skeletal muscle formation and skeletal development, possibly by regulating expression of muscle differentiation factors (PubMed:25686036, PubMed:28327665).</text>
</comment>
<comment type="subunit">
    <text evidence="1 2 3">Homodimer. Interacts with IPO9; the interaction is direct. Associates with 20S and 26S proteasomes (By similarity). Interacts with SMARCD1; promoting SWI/SNF complex recruitment. Interacts with NFKBIZ (By similarity). Interacts with YWHAB (By similarity).</text>
</comment>
<comment type="subcellular location">
    <subcellularLocation>
        <location evidence="1">Nucleus</location>
    </subcellularLocation>
    <subcellularLocation>
        <location evidence="1">Cytoplasm</location>
    </subcellularLocation>
    <subcellularLocation>
        <location evidence="1">Membrane</location>
    </subcellularLocation>
    <text evidence="1">Present mainly in the nuclear fraction, and at much lower level in the cytoplasmic and membrane fractions.</text>
</comment>
<comment type="tissue specificity">
    <text evidence="4 5">Widely expressed (PubMed:22537061). Most abundant in the lung, followed by the skeletal muscle, heart, liver, fat, thymus, lymph node, small intestine, kidney and spleen (PubMed:22537061). In skeletal muscle, expressed at higher level in fast extensor digitorum longus (EDL) and longissimus lumborum (LL) muscles than in slow soleus (SOL) muscles (PubMed:25686036).</text>
</comment>
<comment type="PTM">
    <text evidence="3">Polyubiquitinated. Polyubiquitination is dependent of UBR5 that extends pre-ubiquitinated AKIRIN2.</text>
</comment>
<comment type="similarity">
    <text evidence="7">Belongs to the akirin family.</text>
</comment>
<dbReference type="EMBL" id="JN227885">
    <property type="protein sequence ID" value="AER35882.1"/>
    <property type="molecule type" value="mRNA"/>
</dbReference>
<dbReference type="EMBL" id="KC140110">
    <property type="protein sequence ID" value="AGA94528.1"/>
    <property type="molecule type" value="mRNA"/>
</dbReference>
<dbReference type="EMBL" id="AEMK02000001">
    <property type="status" value="NOT_ANNOTATED_CDS"/>
    <property type="molecule type" value="Genomic_DNA"/>
</dbReference>
<dbReference type="RefSeq" id="NP_001265681.1">
    <property type="nucleotide sequence ID" value="NM_001278752.1"/>
</dbReference>
<dbReference type="SMR" id="A0A287BDC1"/>
<dbReference type="GlyGen" id="A0A287BDC1">
    <property type="glycosylation" value="1 site"/>
</dbReference>
<dbReference type="PaxDb" id="9823-ENSSSCP00000004651"/>
<dbReference type="Ensembl" id="ENSSSCT00000004762.5">
    <property type="protein sequence ID" value="ENSSSCP00000004651.2"/>
    <property type="gene ID" value="ENSSSCG00000004307.5"/>
</dbReference>
<dbReference type="Ensembl" id="ENSSSCT00015050447.1">
    <property type="protein sequence ID" value="ENSSSCP00015020126.1"/>
    <property type="gene ID" value="ENSSSCG00015037910.1"/>
</dbReference>
<dbReference type="Ensembl" id="ENSSSCT00025087601.1">
    <property type="protein sequence ID" value="ENSSSCP00025038183.1"/>
    <property type="gene ID" value="ENSSSCG00025063838.1"/>
</dbReference>
<dbReference type="Ensembl" id="ENSSSCT00030092315.1">
    <property type="protein sequence ID" value="ENSSSCP00030042479.1"/>
    <property type="gene ID" value="ENSSSCG00030066045.1"/>
</dbReference>
<dbReference type="Ensembl" id="ENSSSCT00035045193.1">
    <property type="protein sequence ID" value="ENSSSCP00035018077.1"/>
    <property type="gene ID" value="ENSSSCG00035034100.1"/>
</dbReference>
<dbReference type="Ensembl" id="ENSSSCT00040101685.1">
    <property type="protein sequence ID" value="ENSSSCP00040045819.1"/>
    <property type="gene ID" value="ENSSSCG00040073652.1"/>
</dbReference>
<dbReference type="Ensembl" id="ENSSSCT00045048408.1">
    <property type="protein sequence ID" value="ENSSSCP00045033655.1"/>
    <property type="gene ID" value="ENSSSCG00045028345.1"/>
</dbReference>
<dbReference type="Ensembl" id="ENSSSCT00050094710.1">
    <property type="protein sequence ID" value="ENSSSCP00050040829.1"/>
    <property type="gene ID" value="ENSSSCG00050069421.1"/>
</dbReference>
<dbReference type="Ensembl" id="ENSSSCT00055006100.1">
    <property type="protein sequence ID" value="ENSSSCP00055004785.1"/>
    <property type="gene ID" value="ENSSSCG00055003144.1"/>
</dbReference>
<dbReference type="Ensembl" id="ENSSSCT00060070825.1">
    <property type="protein sequence ID" value="ENSSSCP00060030557.1"/>
    <property type="gene ID" value="ENSSSCG00060052031.1"/>
</dbReference>
<dbReference type="Ensembl" id="ENSSSCT00065081977.1">
    <property type="protein sequence ID" value="ENSSSCP00065035704.1"/>
    <property type="gene ID" value="ENSSSCG00065059848.1"/>
</dbReference>
<dbReference type="Ensembl" id="ENSSSCT00070049327.1">
    <property type="protein sequence ID" value="ENSSSCP00070041657.1"/>
    <property type="gene ID" value="ENSSSCG00070024713.1"/>
</dbReference>
<dbReference type="Ensembl" id="ENSSSCT00085042530">
    <property type="protein sequence ID" value="ENSSSCP00085029923"/>
    <property type="gene ID" value="ENSSSCG00085022149"/>
</dbReference>
<dbReference type="Ensembl" id="ENSSSCT00090059529">
    <property type="protein sequence ID" value="ENSSSCP00090037327"/>
    <property type="gene ID" value="ENSSSCG00090033551"/>
</dbReference>
<dbReference type="Ensembl" id="ENSSSCT00105024143">
    <property type="protein sequence ID" value="ENSSSCP00105017210"/>
    <property type="gene ID" value="ENSSSCG00105012268"/>
</dbReference>
<dbReference type="Ensembl" id="ENSSSCT00110016100">
    <property type="protein sequence ID" value="ENSSSCP00110011169"/>
    <property type="gene ID" value="ENSSSCG00110008299"/>
</dbReference>
<dbReference type="Ensembl" id="ENSSSCT00115002085">
    <property type="protein sequence ID" value="ENSSSCP00115001942"/>
    <property type="gene ID" value="ENSSSCG00115001237"/>
</dbReference>
<dbReference type="Ensembl" id="ENSSSCT00130064997">
    <property type="protein sequence ID" value="ENSSSCP00130046623"/>
    <property type="gene ID" value="ENSSSCG00130033259"/>
</dbReference>
<dbReference type="GeneID" id="100519991"/>
<dbReference type="KEGG" id="ssc:100519991"/>
<dbReference type="CTD" id="55122"/>
<dbReference type="VGNC" id="VGNC:103023">
    <property type="gene designation" value="AKIRIN2"/>
</dbReference>
<dbReference type="eggNOG" id="KOG4330">
    <property type="taxonomic scope" value="Eukaryota"/>
</dbReference>
<dbReference type="GeneTree" id="ENSGT00940000156096"/>
<dbReference type="HOGENOM" id="CLU_119227_0_0_1"/>
<dbReference type="OrthoDB" id="10039914at2759"/>
<dbReference type="TreeFam" id="TF317123"/>
<dbReference type="Proteomes" id="UP000008227">
    <property type="component" value="Chromosome 1"/>
</dbReference>
<dbReference type="Proteomes" id="UP000314985">
    <property type="component" value="Chromosome 1"/>
</dbReference>
<dbReference type="Proteomes" id="UP000694570">
    <property type="component" value="Unplaced"/>
</dbReference>
<dbReference type="Proteomes" id="UP000694571">
    <property type="component" value="Unplaced"/>
</dbReference>
<dbReference type="Proteomes" id="UP000694720">
    <property type="component" value="Unplaced"/>
</dbReference>
<dbReference type="Proteomes" id="UP000694722">
    <property type="component" value="Unplaced"/>
</dbReference>
<dbReference type="Proteomes" id="UP000694723">
    <property type="component" value="Unplaced"/>
</dbReference>
<dbReference type="Proteomes" id="UP000694724">
    <property type="component" value="Unplaced"/>
</dbReference>
<dbReference type="Proteomes" id="UP000694725">
    <property type="component" value="Unplaced"/>
</dbReference>
<dbReference type="Proteomes" id="UP000694726">
    <property type="component" value="Unplaced"/>
</dbReference>
<dbReference type="Proteomes" id="UP000694727">
    <property type="component" value="Unplaced"/>
</dbReference>
<dbReference type="Proteomes" id="UP000694728">
    <property type="component" value="Unplaced"/>
</dbReference>
<dbReference type="Bgee" id="ENSSSCG00000004307">
    <property type="expression patterns" value="Expressed in oocyte and 45 other cell types or tissues"/>
</dbReference>
<dbReference type="ExpressionAtlas" id="A0A287BDC1">
    <property type="expression patterns" value="baseline and differential"/>
</dbReference>
<dbReference type="GO" id="GO:0000785">
    <property type="term" value="C:chromatin"/>
    <property type="evidence" value="ECO:0000318"/>
    <property type="project" value="GO_Central"/>
</dbReference>
<dbReference type="GO" id="GO:0005737">
    <property type="term" value="C:cytoplasm"/>
    <property type="evidence" value="ECO:0007669"/>
    <property type="project" value="UniProtKB-SubCell"/>
</dbReference>
<dbReference type="GO" id="GO:0016020">
    <property type="term" value="C:membrane"/>
    <property type="evidence" value="ECO:0007669"/>
    <property type="project" value="UniProtKB-SubCell"/>
</dbReference>
<dbReference type="GO" id="GO:0005634">
    <property type="term" value="C:nucleus"/>
    <property type="evidence" value="ECO:0000250"/>
    <property type="project" value="UniProtKB"/>
</dbReference>
<dbReference type="GO" id="GO:0030674">
    <property type="term" value="F:protein-macromolecule adaptor activity"/>
    <property type="evidence" value="ECO:0000250"/>
    <property type="project" value="UniProtKB"/>
</dbReference>
<dbReference type="GO" id="GO:0003712">
    <property type="term" value="F:transcription coregulator activity"/>
    <property type="evidence" value="ECO:0000318"/>
    <property type="project" value="GO_Central"/>
</dbReference>
<dbReference type="GO" id="GO:0002250">
    <property type="term" value="P:adaptive immune response"/>
    <property type="evidence" value="ECO:0007669"/>
    <property type="project" value="UniProtKB-KW"/>
</dbReference>
<dbReference type="GO" id="GO:0021987">
    <property type="term" value="P:cerebral cortex development"/>
    <property type="evidence" value="ECO:0000250"/>
    <property type="project" value="UniProtKB"/>
</dbReference>
<dbReference type="GO" id="GO:0042742">
    <property type="term" value="P:defense response to bacterium"/>
    <property type="evidence" value="ECO:0000250"/>
    <property type="project" value="UniProtKB"/>
</dbReference>
<dbReference type="GO" id="GO:0045087">
    <property type="term" value="P:innate immune response"/>
    <property type="evidence" value="ECO:0007669"/>
    <property type="project" value="UniProtKB-KW"/>
</dbReference>
<dbReference type="GO" id="GO:0071630">
    <property type="term" value="P:nuclear protein quality control by the ubiquitin-proteasome system"/>
    <property type="evidence" value="ECO:0000250"/>
    <property type="project" value="UniProtKB"/>
</dbReference>
<dbReference type="GO" id="GO:0002821">
    <property type="term" value="P:positive regulation of adaptive immune response"/>
    <property type="evidence" value="ECO:0000250"/>
    <property type="project" value="UniProtKB"/>
</dbReference>
<dbReference type="GO" id="GO:0045089">
    <property type="term" value="P:positive regulation of innate immune response"/>
    <property type="evidence" value="ECO:0000250"/>
    <property type="project" value="UniProtKB"/>
</dbReference>
<dbReference type="GO" id="GO:0032755">
    <property type="term" value="P:positive regulation of interleukin-6 production"/>
    <property type="evidence" value="ECO:0000250"/>
    <property type="project" value="UniProtKB"/>
</dbReference>
<dbReference type="GO" id="GO:0045944">
    <property type="term" value="P:positive regulation of transcription by RNA polymerase II"/>
    <property type="evidence" value="ECO:0000250"/>
    <property type="project" value="UniProtKB"/>
</dbReference>
<dbReference type="GO" id="GO:0031144">
    <property type="term" value="P:proteasome localization"/>
    <property type="evidence" value="ECO:0000250"/>
    <property type="project" value="UniProtKB"/>
</dbReference>
<dbReference type="GO" id="GO:0006606">
    <property type="term" value="P:protein import into nucleus"/>
    <property type="evidence" value="ECO:0000250"/>
    <property type="project" value="UniProtKB"/>
</dbReference>
<dbReference type="GO" id="GO:0051147">
    <property type="term" value="P:regulation of muscle cell differentiation"/>
    <property type="evidence" value="ECO:0000315"/>
    <property type="project" value="UniProtKB"/>
</dbReference>
<dbReference type="CDD" id="cd22244">
    <property type="entry name" value="akirin-2"/>
    <property type="match status" value="1"/>
</dbReference>
<dbReference type="InterPro" id="IPR024132">
    <property type="entry name" value="Akirin"/>
</dbReference>
<dbReference type="PANTHER" id="PTHR13293:SF8">
    <property type="entry name" value="AKIRIN-2"/>
    <property type="match status" value="1"/>
</dbReference>
<dbReference type="PANTHER" id="PTHR13293">
    <property type="entry name" value="AKIRIN-RELATED"/>
    <property type="match status" value="1"/>
</dbReference>
<protein>
    <recommendedName>
        <fullName evidence="7">Akirin-2</fullName>
    </recommendedName>
</protein>
<gene>
    <name evidence="8" type="primary">AKIRIN2</name>
</gene>
<accession>A0A287BDC1</accession>
<accession>F1S0E7</accession>
<accession>K7NCI8</accession>
<reference key="1">
    <citation type="journal article" date="2012" name="Anim. Biotechnol.">
        <title>Molecular cloning, tissue distribution, and functional analysis of porcine Akirin2.</title>
        <authorList>
            <person name="Chen X."/>
            <person name="Huang Z."/>
            <person name="Jia G."/>
            <person name="Wu X."/>
            <person name="Wu C."/>
        </authorList>
    </citation>
    <scope>NUCLEOTIDE SEQUENCE [MRNA]</scope>
    <scope>TISSUE SPECIFICITY</scope>
</reference>
<reference key="2">
    <citation type="submission" date="2012-11" db="EMBL/GenBank/DDBJ databases">
        <title>Cloning and prokaryotic expression of Sus scrofa Akirin2 gene and affinity purification of its fused Protein.</title>
        <authorList>
            <person name="Guo Y.-J."/>
            <person name="Liu G.-Z."/>
            <person name="Wang C.-M."/>
            <person name="Wang Y.-Y."/>
            <person name="Zhu H.-S."/>
            <person name="Wang L.-F."/>
            <person name="Zhong K."/>
            <person name="Lu W.-F."/>
            <person name="Han L.-Q."/>
            <person name="Yang G.-Q."/>
            <person name="Li H.-J."/>
            <person name="Wang Y.-L."/>
            <person name="Yang G.-Y."/>
        </authorList>
    </citation>
    <scope>NUCLEOTIDE SEQUENCE [MRNA]</scope>
</reference>
<reference key="3">
    <citation type="submission" date="2009-11" db="EMBL/GenBank/DDBJ databases">
        <authorList>
            <consortium name="Porcine genome sequencing project"/>
        </authorList>
    </citation>
    <scope>NUCLEOTIDE SEQUENCE [LARGE SCALE GENOMIC DNA]</scope>
    <source>
        <strain>Duroc</strain>
    </source>
</reference>
<reference key="4">
    <citation type="journal article" date="2015" name="Int. J. Mol. Sci.">
        <title>Effect of porcine Akirin2 on skeletal myosin heavy chain isoform expression.</title>
        <authorList>
            <person name="Chen X."/>
            <person name="Luo Y."/>
            <person name="Zhou B."/>
            <person name="Huang Z."/>
            <person name="Jia G."/>
            <person name="Liu G."/>
            <person name="Zhao H."/>
            <person name="Yang Z."/>
            <person name="Zhang R."/>
        </authorList>
    </citation>
    <scope>FUNCTION</scope>
    <scope>TISSUE SPECIFICITY</scope>
</reference>
<reference key="5">
    <citation type="journal article" date="2017" name="Sci. Rep.">
        <title>Akirin2 regulates proliferation and differentiation of porcine skeletal muscle satellite cells via ERK1/2 and NFATc1 signaling pathways.</title>
        <authorList>
            <person name="Chen X."/>
            <person name="Luo Y."/>
            <person name="Huang Z."/>
            <person name="Jia G."/>
            <person name="Liu G."/>
            <person name="Zhao H."/>
        </authorList>
    </citation>
    <scope>FUNCTION</scope>
</reference>